<name>LDH_STRPF</name>
<dbReference type="EC" id="1.1.1.27" evidence="1"/>
<dbReference type="EMBL" id="CP000262">
    <property type="protein sequence ID" value="ABF37972.1"/>
    <property type="molecule type" value="Genomic_DNA"/>
</dbReference>
<dbReference type="SMR" id="Q1J6L1"/>
<dbReference type="KEGG" id="spi:MGAS10750_Spy1022"/>
<dbReference type="HOGENOM" id="CLU_045401_1_1_9"/>
<dbReference type="UniPathway" id="UPA00554">
    <property type="reaction ID" value="UER00611"/>
</dbReference>
<dbReference type="Proteomes" id="UP000002434">
    <property type="component" value="Chromosome"/>
</dbReference>
<dbReference type="GO" id="GO:0005737">
    <property type="term" value="C:cytoplasm"/>
    <property type="evidence" value="ECO:0007669"/>
    <property type="project" value="UniProtKB-SubCell"/>
</dbReference>
<dbReference type="GO" id="GO:0004459">
    <property type="term" value="F:L-lactate dehydrogenase activity"/>
    <property type="evidence" value="ECO:0007669"/>
    <property type="project" value="UniProtKB-UniRule"/>
</dbReference>
<dbReference type="GO" id="GO:0006096">
    <property type="term" value="P:glycolytic process"/>
    <property type="evidence" value="ECO:0007669"/>
    <property type="project" value="UniProtKB-UniRule"/>
</dbReference>
<dbReference type="GO" id="GO:0006089">
    <property type="term" value="P:lactate metabolic process"/>
    <property type="evidence" value="ECO:0007669"/>
    <property type="project" value="TreeGrafter"/>
</dbReference>
<dbReference type="CDD" id="cd05291">
    <property type="entry name" value="HicDH_like"/>
    <property type="match status" value="1"/>
</dbReference>
<dbReference type="FunFam" id="3.40.50.720:FF:000018">
    <property type="entry name" value="Malate dehydrogenase"/>
    <property type="match status" value="1"/>
</dbReference>
<dbReference type="Gene3D" id="3.90.110.10">
    <property type="entry name" value="Lactate dehydrogenase/glycoside hydrolase, family 4, C-terminal"/>
    <property type="match status" value="1"/>
</dbReference>
<dbReference type="Gene3D" id="3.40.50.720">
    <property type="entry name" value="NAD(P)-binding Rossmann-like Domain"/>
    <property type="match status" value="1"/>
</dbReference>
<dbReference type="HAMAP" id="MF_00488">
    <property type="entry name" value="Lactate_dehydrog"/>
    <property type="match status" value="1"/>
</dbReference>
<dbReference type="InterPro" id="IPR001557">
    <property type="entry name" value="L-lactate/malate_DH"/>
</dbReference>
<dbReference type="InterPro" id="IPR011304">
    <property type="entry name" value="L-lactate_DH"/>
</dbReference>
<dbReference type="InterPro" id="IPR018177">
    <property type="entry name" value="L-lactate_DH_AS"/>
</dbReference>
<dbReference type="InterPro" id="IPR022383">
    <property type="entry name" value="Lactate/malate_DH_C"/>
</dbReference>
<dbReference type="InterPro" id="IPR001236">
    <property type="entry name" value="Lactate/malate_DH_N"/>
</dbReference>
<dbReference type="InterPro" id="IPR015955">
    <property type="entry name" value="Lactate_DH/Glyco_Ohase_4_C"/>
</dbReference>
<dbReference type="InterPro" id="IPR036291">
    <property type="entry name" value="NAD(P)-bd_dom_sf"/>
</dbReference>
<dbReference type="NCBIfam" id="TIGR01771">
    <property type="entry name" value="L-LDH-NAD"/>
    <property type="match status" value="1"/>
</dbReference>
<dbReference type="NCBIfam" id="NF000824">
    <property type="entry name" value="PRK00066.1"/>
    <property type="match status" value="1"/>
</dbReference>
<dbReference type="PANTHER" id="PTHR43128">
    <property type="entry name" value="L-2-HYDROXYCARBOXYLATE DEHYDROGENASE (NAD(P)(+))"/>
    <property type="match status" value="1"/>
</dbReference>
<dbReference type="PANTHER" id="PTHR43128:SF16">
    <property type="entry name" value="L-LACTATE DEHYDROGENASE"/>
    <property type="match status" value="1"/>
</dbReference>
<dbReference type="Pfam" id="PF02866">
    <property type="entry name" value="Ldh_1_C"/>
    <property type="match status" value="1"/>
</dbReference>
<dbReference type="Pfam" id="PF00056">
    <property type="entry name" value="Ldh_1_N"/>
    <property type="match status" value="1"/>
</dbReference>
<dbReference type="PIRSF" id="PIRSF000102">
    <property type="entry name" value="Lac_mal_DH"/>
    <property type="match status" value="1"/>
</dbReference>
<dbReference type="PRINTS" id="PR00086">
    <property type="entry name" value="LLDHDRGNASE"/>
</dbReference>
<dbReference type="SUPFAM" id="SSF56327">
    <property type="entry name" value="LDH C-terminal domain-like"/>
    <property type="match status" value="1"/>
</dbReference>
<dbReference type="SUPFAM" id="SSF51735">
    <property type="entry name" value="NAD(P)-binding Rossmann-fold domains"/>
    <property type="match status" value="1"/>
</dbReference>
<dbReference type="PROSITE" id="PS00064">
    <property type="entry name" value="L_LDH"/>
    <property type="match status" value="1"/>
</dbReference>
<sequence>MTATKQHKKVILVGDGAVGSSYAFALVTQNIAQELGIIDIFKEKTQGDAEDLSHALAFTSPKKIYAADYSDCHDADLVVLTAGAPQKPGETRLDLVEKNLRINKEVVTQIVASGFKGIFLVAANPVDVLTYSTWKFSGFPKERVIGSGTSLDSARFRQALAAKIGVDARSVHAYIMGEHGDSEFAVWSHANVAGVGLYDWLQANRDIDEQGLVDLFISVRDAAYSIINKKGATFYGIAVALARITKAILDDENAVLPLSVFQEGQYEGVEDCYIGQPAIVGAYGIVRPVNIPLNDAELQKMQASANQLKAIIDEAFAKEEFASAAKN</sequence>
<proteinExistence type="inferred from homology"/>
<evidence type="ECO:0000255" key="1">
    <source>
        <dbReference type="HAMAP-Rule" id="MF_00488"/>
    </source>
</evidence>
<accession>Q1J6L1</accession>
<reference key="1">
    <citation type="journal article" date="2006" name="Proc. Natl. Acad. Sci. U.S.A.">
        <title>Molecular genetic anatomy of inter- and intraserotype variation in the human bacterial pathogen group A Streptococcus.</title>
        <authorList>
            <person name="Beres S.B."/>
            <person name="Richter E.W."/>
            <person name="Nagiec M.J."/>
            <person name="Sumby P."/>
            <person name="Porcella S.F."/>
            <person name="DeLeo F.R."/>
            <person name="Musser J.M."/>
        </authorList>
    </citation>
    <scope>NUCLEOTIDE SEQUENCE [LARGE SCALE GENOMIC DNA]</scope>
    <source>
        <strain>MGAS10750</strain>
    </source>
</reference>
<organism>
    <name type="scientific">Streptococcus pyogenes serotype M4 (strain MGAS10750)</name>
    <dbReference type="NCBI Taxonomy" id="370554"/>
    <lineage>
        <taxon>Bacteria</taxon>
        <taxon>Bacillati</taxon>
        <taxon>Bacillota</taxon>
        <taxon>Bacilli</taxon>
        <taxon>Lactobacillales</taxon>
        <taxon>Streptococcaceae</taxon>
        <taxon>Streptococcus</taxon>
    </lineage>
</organism>
<comment type="function">
    <text evidence="1">Catalyzes the conversion of lactate to pyruvate.</text>
</comment>
<comment type="catalytic activity">
    <reaction evidence="1">
        <text>(S)-lactate + NAD(+) = pyruvate + NADH + H(+)</text>
        <dbReference type="Rhea" id="RHEA:23444"/>
        <dbReference type="ChEBI" id="CHEBI:15361"/>
        <dbReference type="ChEBI" id="CHEBI:15378"/>
        <dbReference type="ChEBI" id="CHEBI:16651"/>
        <dbReference type="ChEBI" id="CHEBI:57540"/>
        <dbReference type="ChEBI" id="CHEBI:57945"/>
        <dbReference type="EC" id="1.1.1.27"/>
    </reaction>
</comment>
<comment type="activity regulation">
    <text evidence="1">Allosterically activated by fructose 1,6-bisphosphate (FBP).</text>
</comment>
<comment type="pathway">
    <text evidence="1">Fermentation; pyruvate fermentation to lactate; (S)-lactate from pyruvate: step 1/1.</text>
</comment>
<comment type="subunit">
    <text evidence="1">Homotetramer.</text>
</comment>
<comment type="subcellular location">
    <subcellularLocation>
        <location evidence="1">Cytoplasm</location>
    </subcellularLocation>
</comment>
<comment type="similarity">
    <text evidence="1">Belongs to the LDH/MDH superfamily. LDH family.</text>
</comment>
<protein>
    <recommendedName>
        <fullName evidence="1">L-lactate dehydrogenase</fullName>
        <shortName evidence="1">L-LDH</shortName>
        <ecNumber evidence="1">1.1.1.27</ecNumber>
    </recommendedName>
</protein>
<feature type="chain" id="PRO_1000026512" description="L-lactate dehydrogenase">
    <location>
        <begin position="1"/>
        <end position="327"/>
    </location>
</feature>
<feature type="active site" description="Proton acceptor" evidence="1">
    <location>
        <position position="179"/>
    </location>
</feature>
<feature type="binding site" evidence="1">
    <location>
        <position position="18"/>
    </location>
    <ligand>
        <name>NAD(+)</name>
        <dbReference type="ChEBI" id="CHEBI:57540"/>
    </ligand>
</feature>
<feature type="binding site" evidence="1">
    <location>
        <position position="39"/>
    </location>
    <ligand>
        <name>NAD(+)</name>
        <dbReference type="ChEBI" id="CHEBI:57540"/>
    </ligand>
</feature>
<feature type="binding site" evidence="1">
    <location>
        <position position="44"/>
    </location>
    <ligand>
        <name>NAD(+)</name>
        <dbReference type="ChEBI" id="CHEBI:57540"/>
    </ligand>
</feature>
<feature type="binding site" evidence="1">
    <location>
        <position position="69"/>
    </location>
    <ligand>
        <name>NAD(+)</name>
        <dbReference type="ChEBI" id="CHEBI:57540"/>
    </ligand>
</feature>
<feature type="binding site" evidence="1">
    <location>
        <begin position="83"/>
        <end position="84"/>
    </location>
    <ligand>
        <name>NAD(+)</name>
        <dbReference type="ChEBI" id="CHEBI:57540"/>
    </ligand>
</feature>
<feature type="binding site" evidence="1">
    <location>
        <position position="86"/>
    </location>
    <ligand>
        <name>substrate</name>
    </ligand>
</feature>
<feature type="binding site" evidence="1">
    <location>
        <position position="92"/>
    </location>
    <ligand>
        <name>substrate</name>
    </ligand>
</feature>
<feature type="binding site" evidence="1">
    <location>
        <begin position="122"/>
        <end position="124"/>
    </location>
    <ligand>
        <name>NAD(+)</name>
        <dbReference type="ChEBI" id="CHEBI:57540"/>
    </ligand>
</feature>
<feature type="binding site" evidence="1">
    <location>
        <begin position="124"/>
        <end position="127"/>
    </location>
    <ligand>
        <name>substrate</name>
    </ligand>
</feature>
<feature type="binding site" evidence="1">
    <location>
        <position position="147"/>
    </location>
    <ligand>
        <name>NAD(+)</name>
        <dbReference type="ChEBI" id="CHEBI:57540"/>
    </ligand>
</feature>
<feature type="binding site" evidence="1">
    <location>
        <begin position="152"/>
        <end position="155"/>
    </location>
    <ligand>
        <name>substrate</name>
    </ligand>
</feature>
<feature type="binding site" evidence="1">
    <location>
        <position position="157"/>
    </location>
    <ligand>
        <name>beta-D-fructose 1,6-bisphosphate</name>
        <dbReference type="ChEBI" id="CHEBI:32966"/>
        <note>allosteric activator</note>
    </ligand>
</feature>
<feature type="binding site" evidence="1">
    <location>
        <position position="172"/>
    </location>
    <ligand>
        <name>beta-D-fructose 1,6-bisphosphate</name>
        <dbReference type="ChEBI" id="CHEBI:32966"/>
        <note>allosteric activator</note>
    </ligand>
</feature>
<feature type="binding site" evidence="1">
    <location>
        <position position="233"/>
    </location>
    <ligand>
        <name>substrate</name>
    </ligand>
</feature>
<feature type="modified residue" description="Phosphotyrosine" evidence="1">
    <location>
        <position position="224"/>
    </location>
</feature>
<gene>
    <name evidence="1" type="primary">ldh</name>
    <name type="ordered locus">MGAS10750_Spy1022</name>
</gene>
<keyword id="KW-0021">Allosteric enzyme</keyword>
<keyword id="KW-0963">Cytoplasm</keyword>
<keyword id="KW-0520">NAD</keyword>
<keyword id="KW-0560">Oxidoreductase</keyword>
<keyword id="KW-0597">Phosphoprotein</keyword>